<feature type="chain" id="PRO_1000127859" description="ATP synthase epsilon chain">
    <location>
        <begin position="1"/>
        <end position="145"/>
    </location>
</feature>
<organism>
    <name type="scientific">Francisella tularensis subsp. mediasiatica (strain FSC147)</name>
    <dbReference type="NCBI Taxonomy" id="441952"/>
    <lineage>
        <taxon>Bacteria</taxon>
        <taxon>Pseudomonadati</taxon>
        <taxon>Pseudomonadota</taxon>
        <taxon>Gammaproteobacteria</taxon>
        <taxon>Thiotrichales</taxon>
        <taxon>Francisellaceae</taxon>
        <taxon>Francisella</taxon>
    </lineage>
</organism>
<gene>
    <name evidence="1" type="primary">atpC</name>
    <name type="ordered locus">FTM_0129</name>
</gene>
<reference key="1">
    <citation type="journal article" date="2009" name="PLoS Pathog.">
        <title>Molecular evolutionary consequences of niche restriction in Francisella tularensis, a facultative intracellular pathogen.</title>
        <authorList>
            <person name="Larsson P."/>
            <person name="Elfsmark D."/>
            <person name="Svensson K."/>
            <person name="Wikstroem P."/>
            <person name="Forsman M."/>
            <person name="Brettin T."/>
            <person name="Keim P."/>
            <person name="Johansson A."/>
        </authorList>
    </citation>
    <scope>NUCLEOTIDE SEQUENCE [LARGE SCALE GENOMIC DNA]</scope>
    <source>
        <strain>FSC147</strain>
    </source>
</reference>
<keyword id="KW-0066">ATP synthesis</keyword>
<keyword id="KW-0997">Cell inner membrane</keyword>
<keyword id="KW-1003">Cell membrane</keyword>
<keyword id="KW-0139">CF(1)</keyword>
<keyword id="KW-0375">Hydrogen ion transport</keyword>
<keyword id="KW-0406">Ion transport</keyword>
<keyword id="KW-0472">Membrane</keyword>
<keyword id="KW-0813">Transport</keyword>
<comment type="function">
    <text evidence="1">Produces ATP from ADP in the presence of a proton gradient across the membrane.</text>
</comment>
<comment type="subunit">
    <text evidence="1">F-type ATPases have 2 components, CF(1) - the catalytic core - and CF(0) - the membrane proton channel. CF(1) has five subunits: alpha(3), beta(3), gamma(1), delta(1), epsilon(1). CF(0) has three main subunits: a, b and c.</text>
</comment>
<comment type="subcellular location">
    <subcellularLocation>
        <location evidence="1">Cell inner membrane</location>
        <topology evidence="1">Peripheral membrane protein</topology>
    </subcellularLocation>
</comment>
<comment type="similarity">
    <text evidence="1">Belongs to the ATPase epsilon chain family.</text>
</comment>
<sequence>MTKKYLKVDVVSPLGSVFKGEADMVSLRGSAGEMGIAYGHTELLSTLPAGVVNVRKDQHTDVLYVSGGIVEVTPTRVTIMVDDMERAENLNQAEAEKARVRAKEVLKNPDASKLDIEAANKRLKEADARLKALNSSNGLYYSKDD</sequence>
<proteinExistence type="inferred from homology"/>
<accession>B2SEY2</accession>
<protein>
    <recommendedName>
        <fullName evidence="1">ATP synthase epsilon chain</fullName>
    </recommendedName>
    <alternativeName>
        <fullName evidence="1">ATP synthase F1 sector epsilon subunit</fullName>
    </alternativeName>
    <alternativeName>
        <fullName evidence="1">F-ATPase epsilon subunit</fullName>
    </alternativeName>
</protein>
<dbReference type="EMBL" id="CP000915">
    <property type="protein sequence ID" value="ACD30227.1"/>
    <property type="molecule type" value="Genomic_DNA"/>
</dbReference>
<dbReference type="SMR" id="B2SEY2"/>
<dbReference type="KEGG" id="ftm:FTM_0129"/>
<dbReference type="HOGENOM" id="CLU_084338_1_3_6"/>
<dbReference type="GO" id="GO:0005886">
    <property type="term" value="C:plasma membrane"/>
    <property type="evidence" value="ECO:0007669"/>
    <property type="project" value="UniProtKB-SubCell"/>
</dbReference>
<dbReference type="GO" id="GO:0045259">
    <property type="term" value="C:proton-transporting ATP synthase complex"/>
    <property type="evidence" value="ECO:0007669"/>
    <property type="project" value="UniProtKB-KW"/>
</dbReference>
<dbReference type="GO" id="GO:0005524">
    <property type="term" value="F:ATP binding"/>
    <property type="evidence" value="ECO:0007669"/>
    <property type="project" value="UniProtKB-UniRule"/>
</dbReference>
<dbReference type="GO" id="GO:0046933">
    <property type="term" value="F:proton-transporting ATP synthase activity, rotational mechanism"/>
    <property type="evidence" value="ECO:0007669"/>
    <property type="project" value="UniProtKB-UniRule"/>
</dbReference>
<dbReference type="CDD" id="cd12152">
    <property type="entry name" value="F1-ATPase_delta"/>
    <property type="match status" value="1"/>
</dbReference>
<dbReference type="Gene3D" id="2.60.15.10">
    <property type="entry name" value="F0F1 ATP synthase delta/epsilon subunit, N-terminal"/>
    <property type="match status" value="1"/>
</dbReference>
<dbReference type="HAMAP" id="MF_00530">
    <property type="entry name" value="ATP_synth_epsil_bac"/>
    <property type="match status" value="1"/>
</dbReference>
<dbReference type="InterPro" id="IPR001469">
    <property type="entry name" value="ATP_synth_F1_dsu/esu"/>
</dbReference>
<dbReference type="InterPro" id="IPR020546">
    <property type="entry name" value="ATP_synth_F1_dsu/esu_N"/>
</dbReference>
<dbReference type="InterPro" id="IPR036771">
    <property type="entry name" value="ATPsynth_dsu/esu_N"/>
</dbReference>
<dbReference type="NCBIfam" id="TIGR01216">
    <property type="entry name" value="ATP_synt_epsi"/>
    <property type="match status" value="1"/>
</dbReference>
<dbReference type="NCBIfam" id="NF009986">
    <property type="entry name" value="PRK13452.1"/>
    <property type="match status" value="1"/>
</dbReference>
<dbReference type="PANTHER" id="PTHR13822">
    <property type="entry name" value="ATP SYNTHASE DELTA/EPSILON CHAIN"/>
    <property type="match status" value="1"/>
</dbReference>
<dbReference type="PANTHER" id="PTHR13822:SF10">
    <property type="entry name" value="ATP SYNTHASE EPSILON CHAIN, CHLOROPLASTIC"/>
    <property type="match status" value="1"/>
</dbReference>
<dbReference type="Pfam" id="PF02823">
    <property type="entry name" value="ATP-synt_DE_N"/>
    <property type="match status" value="1"/>
</dbReference>
<dbReference type="SUPFAM" id="SSF51344">
    <property type="entry name" value="Epsilon subunit of F1F0-ATP synthase N-terminal domain"/>
    <property type="match status" value="1"/>
</dbReference>
<name>ATPE_FRATM</name>
<evidence type="ECO:0000255" key="1">
    <source>
        <dbReference type="HAMAP-Rule" id="MF_00530"/>
    </source>
</evidence>